<evidence type="ECO:0000255" key="1">
    <source>
        <dbReference type="HAMAP-Rule" id="MF_01862"/>
    </source>
</evidence>
<comment type="function">
    <text evidence="1">Specifically methylates the guanine in position 1207 of 16S rRNA in the 30S particle.</text>
</comment>
<comment type="catalytic activity">
    <reaction evidence="1">
        <text>guanosine(1207) in 16S rRNA + S-adenosyl-L-methionine = N(2)-methylguanosine(1207) in 16S rRNA + S-adenosyl-L-homocysteine + H(+)</text>
        <dbReference type="Rhea" id="RHEA:42736"/>
        <dbReference type="Rhea" id="RHEA-COMP:10213"/>
        <dbReference type="Rhea" id="RHEA-COMP:10214"/>
        <dbReference type="ChEBI" id="CHEBI:15378"/>
        <dbReference type="ChEBI" id="CHEBI:57856"/>
        <dbReference type="ChEBI" id="CHEBI:59789"/>
        <dbReference type="ChEBI" id="CHEBI:74269"/>
        <dbReference type="ChEBI" id="CHEBI:74481"/>
        <dbReference type="EC" id="2.1.1.172"/>
    </reaction>
</comment>
<comment type="subunit">
    <text evidence="1">Monomer.</text>
</comment>
<comment type="subcellular location">
    <subcellularLocation>
        <location evidence="1">Cytoplasm</location>
    </subcellularLocation>
</comment>
<comment type="similarity">
    <text evidence="1">Belongs to the methyltransferase superfamily. RsmC family.</text>
</comment>
<feature type="chain" id="PRO_0000369807" description="Ribosomal RNA small subunit methyltransferase C">
    <location>
        <begin position="1"/>
        <end position="347"/>
    </location>
</feature>
<proteinExistence type="inferred from homology"/>
<sequence>MSALTPASEVILRHSDEFIARHVLFAGDLQDALPAQFDAAGVRVHTNQYHHWQLLSNTLEENVQFGLLATAETLAACDTLIYYWPKSKQEAQFQLANLLSILPVGTDIFVVGENRSGVRSAEEMLADFAQLAKIDSARRCGLYHGRLDKQPEFDADAWWESYQVGGVTVKTLPGVFSRDSLDSGSHLLLSTFNEPFKGSVLDVGCGAGVLASVLAQQSPKIKWTLSDVSAAAIEASRATLAVNNIEAQVIASNVYSDIKGRFEMIISNPPFHDGIQTSLTAAEMLIRGATAHLHVGGKLRIVANSFLPYPALLDAAFGSHEVLAQNGRFKVYQATVGRPPRDPKKKR</sequence>
<accession>A7FMI4</accession>
<reference key="1">
    <citation type="journal article" date="2007" name="PLoS Genet.">
        <title>The complete genome sequence of Yersinia pseudotuberculosis IP31758, the causative agent of Far East scarlet-like fever.</title>
        <authorList>
            <person name="Eppinger M."/>
            <person name="Rosovitz M.J."/>
            <person name="Fricke W.F."/>
            <person name="Rasko D.A."/>
            <person name="Kokorina G."/>
            <person name="Fayolle C."/>
            <person name="Lindler L.E."/>
            <person name="Carniel E."/>
            <person name="Ravel J."/>
        </authorList>
    </citation>
    <scope>NUCLEOTIDE SEQUENCE [LARGE SCALE GENOMIC DNA]</scope>
    <source>
        <strain>IP 31758</strain>
    </source>
</reference>
<name>RSMC_YERP3</name>
<organism>
    <name type="scientific">Yersinia pseudotuberculosis serotype O:1b (strain IP 31758)</name>
    <dbReference type="NCBI Taxonomy" id="349747"/>
    <lineage>
        <taxon>Bacteria</taxon>
        <taxon>Pseudomonadati</taxon>
        <taxon>Pseudomonadota</taxon>
        <taxon>Gammaproteobacteria</taxon>
        <taxon>Enterobacterales</taxon>
        <taxon>Yersiniaceae</taxon>
        <taxon>Yersinia</taxon>
    </lineage>
</organism>
<dbReference type="EC" id="2.1.1.172" evidence="1"/>
<dbReference type="EMBL" id="CP000720">
    <property type="protein sequence ID" value="ABS45930.1"/>
    <property type="molecule type" value="Genomic_DNA"/>
</dbReference>
<dbReference type="RefSeq" id="WP_002209206.1">
    <property type="nucleotide sequence ID" value="NC_009708.1"/>
</dbReference>
<dbReference type="SMR" id="A7FMI4"/>
<dbReference type="GeneID" id="57974183"/>
<dbReference type="KEGG" id="ypi:YpsIP31758_3507"/>
<dbReference type="HOGENOM" id="CLU_049581_0_1_6"/>
<dbReference type="Proteomes" id="UP000002412">
    <property type="component" value="Chromosome"/>
</dbReference>
<dbReference type="GO" id="GO:0005737">
    <property type="term" value="C:cytoplasm"/>
    <property type="evidence" value="ECO:0007669"/>
    <property type="project" value="UniProtKB-SubCell"/>
</dbReference>
<dbReference type="GO" id="GO:0052914">
    <property type="term" value="F:16S rRNA (guanine(1207)-N(2))-methyltransferase activity"/>
    <property type="evidence" value="ECO:0007669"/>
    <property type="project" value="UniProtKB-EC"/>
</dbReference>
<dbReference type="GO" id="GO:0003676">
    <property type="term" value="F:nucleic acid binding"/>
    <property type="evidence" value="ECO:0007669"/>
    <property type="project" value="InterPro"/>
</dbReference>
<dbReference type="CDD" id="cd02440">
    <property type="entry name" value="AdoMet_MTases"/>
    <property type="match status" value="1"/>
</dbReference>
<dbReference type="Gene3D" id="3.40.50.150">
    <property type="entry name" value="Vaccinia Virus protein VP39"/>
    <property type="match status" value="2"/>
</dbReference>
<dbReference type="HAMAP" id="MF_01862">
    <property type="entry name" value="16SrRNA_methyltr_C"/>
    <property type="match status" value="1"/>
</dbReference>
<dbReference type="InterPro" id="IPR002052">
    <property type="entry name" value="DNA_methylase_N6_adenine_CS"/>
</dbReference>
<dbReference type="InterPro" id="IPR013675">
    <property type="entry name" value="Mtase_sm_N"/>
</dbReference>
<dbReference type="InterPro" id="IPR023543">
    <property type="entry name" value="rRNA_ssu_MeTfrase_C"/>
</dbReference>
<dbReference type="InterPro" id="IPR046977">
    <property type="entry name" value="RsmC/RlmG"/>
</dbReference>
<dbReference type="InterPro" id="IPR029063">
    <property type="entry name" value="SAM-dependent_MTases_sf"/>
</dbReference>
<dbReference type="InterPro" id="IPR007848">
    <property type="entry name" value="Small_mtfrase_dom"/>
</dbReference>
<dbReference type="NCBIfam" id="NF007023">
    <property type="entry name" value="PRK09489.1"/>
    <property type="match status" value="1"/>
</dbReference>
<dbReference type="PANTHER" id="PTHR47816">
    <property type="entry name" value="RIBOSOMAL RNA SMALL SUBUNIT METHYLTRANSFERASE C"/>
    <property type="match status" value="1"/>
</dbReference>
<dbReference type="PANTHER" id="PTHR47816:SF4">
    <property type="entry name" value="RIBOSOMAL RNA SMALL SUBUNIT METHYLTRANSFERASE C"/>
    <property type="match status" value="1"/>
</dbReference>
<dbReference type="Pfam" id="PF05175">
    <property type="entry name" value="MTS"/>
    <property type="match status" value="1"/>
</dbReference>
<dbReference type="Pfam" id="PF08468">
    <property type="entry name" value="MTS_N"/>
    <property type="match status" value="1"/>
</dbReference>
<dbReference type="SUPFAM" id="SSF53335">
    <property type="entry name" value="S-adenosyl-L-methionine-dependent methyltransferases"/>
    <property type="match status" value="1"/>
</dbReference>
<protein>
    <recommendedName>
        <fullName evidence="1">Ribosomal RNA small subunit methyltransferase C</fullName>
        <ecNumber evidence="1">2.1.1.172</ecNumber>
    </recommendedName>
    <alternativeName>
        <fullName evidence="1">16S rRNA m2G1207 methyltransferase</fullName>
    </alternativeName>
    <alternativeName>
        <fullName evidence="1">rRNA (guanine-N(2)-)-methyltransferase RsmC</fullName>
    </alternativeName>
</protein>
<keyword id="KW-0963">Cytoplasm</keyword>
<keyword id="KW-0489">Methyltransferase</keyword>
<keyword id="KW-0698">rRNA processing</keyword>
<keyword id="KW-0949">S-adenosyl-L-methionine</keyword>
<keyword id="KW-0808">Transferase</keyword>
<gene>
    <name evidence="1" type="primary">rsmC</name>
    <name type="ordered locus">YpsIP31758_3507</name>
</gene>